<name>LTOR2_CAEEL</name>
<gene>
    <name evidence="3" type="primary">lmtr-2</name>
    <name evidence="3" type="ORF">Y97E10AR.7</name>
</gene>
<keyword id="KW-1185">Reference proteome</keyword>
<reference key="1">
    <citation type="journal article" date="1998" name="Science">
        <title>Genome sequence of the nematode C. elegans: a platform for investigating biology.</title>
        <authorList>
            <consortium name="The C. elegans sequencing consortium"/>
        </authorList>
    </citation>
    <scope>NUCLEOTIDE SEQUENCE [LARGE SCALE GENOMIC DNA]</scope>
    <source>
        <strain>Bristol N2</strain>
    </source>
</reference>
<proteinExistence type="inferred from homology"/>
<comment type="function">
    <text evidence="1">Regulator of the TOR pathway, a signaling cascade that promotes cell growth in response to growth factors, energy levels, and amino acids. May activate the TOR signaling cascade in response to amino acids.</text>
</comment>
<comment type="subunit">
    <text evidence="1">Part of the Ragulator complex.</text>
</comment>
<comment type="similarity">
    <text evidence="2">Belongs to the GAMAD family.</text>
</comment>
<protein>
    <recommendedName>
        <fullName evidence="1">Ragulator complex protein LAMTOR2 homolog</fullName>
    </recommendedName>
    <alternativeName>
        <fullName evidence="3">Late endosomal/lysosomal adapter and MAPK and MTOR activator 1</fullName>
    </alternativeName>
</protein>
<sequence length="124" mass="13188">MLKQKALVDVLGQVNTSGVDGSWLFNKEGLLLAYVGSEQKAVASNVSSALIASVWAALERRANDLKETILVLENGVIGCTLVARTMLLAVKADKSADLGMVRAKLHTLAAYLEQPILSISHDLG</sequence>
<feature type="chain" id="PRO_0000220962" description="Ragulator complex protein LAMTOR2 homolog" evidence="2">
    <location>
        <begin position="1"/>
        <end position="124"/>
    </location>
</feature>
<accession>Q9N2U6</accession>
<evidence type="ECO:0000250" key="1">
    <source>
        <dbReference type="UniProtKB" id="Q9Y2Q5"/>
    </source>
</evidence>
<evidence type="ECO:0000305" key="2"/>
<evidence type="ECO:0000312" key="3">
    <source>
        <dbReference type="WormBase" id="Y97E10AR.7"/>
    </source>
</evidence>
<organism>
    <name type="scientific">Caenorhabditis elegans</name>
    <dbReference type="NCBI Taxonomy" id="6239"/>
    <lineage>
        <taxon>Eukaryota</taxon>
        <taxon>Metazoa</taxon>
        <taxon>Ecdysozoa</taxon>
        <taxon>Nematoda</taxon>
        <taxon>Chromadorea</taxon>
        <taxon>Rhabditida</taxon>
        <taxon>Rhabditina</taxon>
        <taxon>Rhabditomorpha</taxon>
        <taxon>Rhabditoidea</taxon>
        <taxon>Rhabditidae</taxon>
        <taxon>Peloderinae</taxon>
        <taxon>Caenorhabditis</taxon>
    </lineage>
</organism>
<dbReference type="EMBL" id="FO081378">
    <property type="protein sequence ID" value="CCD71184.1"/>
    <property type="molecule type" value="Genomic_DNA"/>
</dbReference>
<dbReference type="RefSeq" id="NP_505061.1">
    <property type="nucleotide sequence ID" value="NM_072660.8"/>
</dbReference>
<dbReference type="SMR" id="Q9N2U6"/>
<dbReference type="BioGRID" id="44219">
    <property type="interactions" value="6"/>
</dbReference>
<dbReference type="FunCoup" id="Q9N2U6">
    <property type="interactions" value="1144"/>
</dbReference>
<dbReference type="IntAct" id="Q9N2U6">
    <property type="interactions" value="2"/>
</dbReference>
<dbReference type="STRING" id="6239.Y97E10AR.7.2"/>
<dbReference type="PaxDb" id="6239-Y97E10AR.7.2"/>
<dbReference type="PeptideAtlas" id="Q9N2U6"/>
<dbReference type="EnsemblMetazoa" id="Y97E10AR.7.1">
    <property type="protein sequence ID" value="Y97E10AR.7.1"/>
    <property type="gene ID" value="WBGene00022402"/>
</dbReference>
<dbReference type="GeneID" id="179177"/>
<dbReference type="KEGG" id="cel:CELE_Y97E10AR.7"/>
<dbReference type="UCSC" id="Y97E10AR.7.2">
    <property type="organism name" value="c. elegans"/>
</dbReference>
<dbReference type="AGR" id="WB:WBGene00022402"/>
<dbReference type="CTD" id="179177"/>
<dbReference type="WormBase" id="Y97E10AR.7">
    <property type="protein sequence ID" value="CE25642"/>
    <property type="gene ID" value="WBGene00022402"/>
    <property type="gene designation" value="lmtr-2"/>
</dbReference>
<dbReference type="eggNOG" id="KOG4107">
    <property type="taxonomic scope" value="Eukaryota"/>
</dbReference>
<dbReference type="GeneTree" id="ENSGT00390000006100"/>
<dbReference type="HOGENOM" id="CLU_141118_0_0_1"/>
<dbReference type="InParanoid" id="Q9N2U6"/>
<dbReference type="OMA" id="WAAYEKN"/>
<dbReference type="OrthoDB" id="282270at2759"/>
<dbReference type="PhylomeDB" id="Q9N2U6"/>
<dbReference type="Reactome" id="R-CEL-1632852">
    <property type="pathway name" value="Macroautophagy"/>
</dbReference>
<dbReference type="Reactome" id="R-CEL-165159">
    <property type="pathway name" value="MTOR signalling"/>
</dbReference>
<dbReference type="Reactome" id="R-CEL-166208">
    <property type="pathway name" value="mTORC1-mediated signalling"/>
</dbReference>
<dbReference type="Reactome" id="R-CEL-380972">
    <property type="pathway name" value="Energy dependent regulation of mTOR by LKB1-AMPK"/>
</dbReference>
<dbReference type="Reactome" id="R-CEL-5628897">
    <property type="pathway name" value="TP53 Regulates Metabolic Genes"/>
</dbReference>
<dbReference type="Reactome" id="R-CEL-5674135">
    <property type="pathway name" value="MAP2K and MAPK activation"/>
</dbReference>
<dbReference type="Reactome" id="R-CEL-6798695">
    <property type="pathway name" value="Neutrophil degranulation"/>
</dbReference>
<dbReference type="Reactome" id="R-CEL-8943724">
    <property type="pathway name" value="Regulation of PTEN gene transcription"/>
</dbReference>
<dbReference type="Reactome" id="R-CEL-9639288">
    <property type="pathway name" value="Amino acids regulate mTORC1"/>
</dbReference>
<dbReference type="PRO" id="PR:Q9N2U6"/>
<dbReference type="Proteomes" id="UP000001940">
    <property type="component" value="Chromosome V"/>
</dbReference>
<dbReference type="Bgee" id="WBGene00022402">
    <property type="expression patterns" value="Expressed in germ line (C elegans) and 4 other cell types or tissues"/>
</dbReference>
<dbReference type="GO" id="GO:0071986">
    <property type="term" value="C:Ragulator complex"/>
    <property type="evidence" value="ECO:0000318"/>
    <property type="project" value="GO_Central"/>
</dbReference>
<dbReference type="GO" id="GO:0005085">
    <property type="term" value="F:guanyl-nucleotide exchange factor activity"/>
    <property type="evidence" value="ECO:0007669"/>
    <property type="project" value="InterPro"/>
</dbReference>
<dbReference type="GO" id="GO:0060090">
    <property type="term" value="F:molecular adaptor activity"/>
    <property type="evidence" value="ECO:0007669"/>
    <property type="project" value="InterPro"/>
</dbReference>
<dbReference type="GO" id="GO:0071230">
    <property type="term" value="P:cellular response to amino acid stimulus"/>
    <property type="evidence" value="ECO:0000250"/>
    <property type="project" value="UniProtKB"/>
</dbReference>
<dbReference type="GO" id="GO:0032008">
    <property type="term" value="P:positive regulation of TOR signaling"/>
    <property type="evidence" value="ECO:0000250"/>
    <property type="project" value="UniProtKB"/>
</dbReference>
<dbReference type="GO" id="GO:0008104">
    <property type="term" value="P:protein localization"/>
    <property type="evidence" value="ECO:0000250"/>
    <property type="project" value="UniProtKB"/>
</dbReference>
<dbReference type="GO" id="GO:0001558">
    <property type="term" value="P:regulation of cell growth"/>
    <property type="evidence" value="ECO:0000250"/>
    <property type="project" value="UniProtKB"/>
</dbReference>
<dbReference type="FunFam" id="3.30.450.30:FF:000004">
    <property type="entry name" value="ragulator complex protein LAMTOR2"/>
    <property type="match status" value="1"/>
</dbReference>
<dbReference type="Gene3D" id="3.30.450.30">
    <property type="entry name" value="Dynein light chain 2a, cytoplasmic"/>
    <property type="match status" value="1"/>
</dbReference>
<dbReference type="InterPro" id="IPR037587">
    <property type="entry name" value="LAMTOR2-like"/>
</dbReference>
<dbReference type="InterPro" id="IPR004942">
    <property type="entry name" value="Roadblock/LAMTOR2_dom"/>
</dbReference>
<dbReference type="PANTHER" id="PTHR13323">
    <property type="entry name" value="LATE ENDOSOMAL/LYSOSOMAL MP1 INTERACTING PROTEIN"/>
    <property type="match status" value="1"/>
</dbReference>
<dbReference type="Pfam" id="PF03259">
    <property type="entry name" value="Robl_LC7"/>
    <property type="match status" value="1"/>
</dbReference>
<dbReference type="SMART" id="SM00960">
    <property type="entry name" value="Robl_LC7"/>
    <property type="match status" value="1"/>
</dbReference>
<dbReference type="SUPFAM" id="SSF103196">
    <property type="entry name" value="Roadblock/LC7 domain"/>
    <property type="match status" value="1"/>
</dbReference>